<feature type="chain" id="PRO_0000394837" description="Thioredoxin-like 1-1, chloroplastic">
    <location>
        <begin position="1"/>
        <end position="279"/>
    </location>
</feature>
<feature type="domain" description="Thioredoxin" evidence="2">
    <location>
        <begin position="56"/>
        <end position="202"/>
    </location>
</feature>
<feature type="active site" description="Nucleophile" evidence="1">
    <location>
        <position position="125"/>
    </location>
</feature>
<feature type="active site" description="Nucleophile" evidence="1">
    <location>
        <position position="128"/>
    </location>
</feature>
<feature type="disulfide bond" description="Redox-active" evidence="2">
    <location>
        <begin position="125"/>
        <end position="128"/>
    </location>
</feature>
<accession>Q6Z4N3</accession>
<accession>A0A0P0XAG7</accession>
<reference key="1">
    <citation type="journal article" date="2005" name="Nature">
        <title>The map-based sequence of the rice genome.</title>
        <authorList>
            <consortium name="International rice genome sequencing project (IRGSP)"/>
        </authorList>
    </citation>
    <scope>NUCLEOTIDE SEQUENCE [LARGE SCALE GENOMIC DNA]</scope>
    <source>
        <strain>cv. Nipponbare</strain>
    </source>
</reference>
<reference key="2">
    <citation type="journal article" date="2008" name="Nucleic Acids Res.">
        <title>The rice annotation project database (RAP-DB): 2008 update.</title>
        <authorList>
            <consortium name="The rice annotation project (RAP)"/>
        </authorList>
    </citation>
    <scope>GENOME REANNOTATION</scope>
    <source>
        <strain>cv. Nipponbare</strain>
    </source>
</reference>
<reference key="3">
    <citation type="journal article" date="2013" name="Rice">
        <title>Improvement of the Oryza sativa Nipponbare reference genome using next generation sequence and optical map data.</title>
        <authorList>
            <person name="Kawahara Y."/>
            <person name="de la Bastide M."/>
            <person name="Hamilton J.P."/>
            <person name="Kanamori H."/>
            <person name="McCombie W.R."/>
            <person name="Ouyang S."/>
            <person name="Schwartz D.C."/>
            <person name="Tanaka T."/>
            <person name="Wu J."/>
            <person name="Zhou S."/>
            <person name="Childs K.L."/>
            <person name="Davidson R.M."/>
            <person name="Lin H."/>
            <person name="Quesada-Ocampo L."/>
            <person name="Vaillancourt B."/>
            <person name="Sakai H."/>
            <person name="Lee S.S."/>
            <person name="Kim J."/>
            <person name="Numa H."/>
            <person name="Itoh T."/>
            <person name="Buell C.R."/>
            <person name="Matsumoto T."/>
        </authorList>
    </citation>
    <scope>GENOME REANNOTATION</scope>
    <source>
        <strain>cv. Nipponbare</strain>
    </source>
</reference>
<reference key="4">
    <citation type="journal article" date="2005" name="PLoS Biol.">
        <title>The genomes of Oryza sativa: a history of duplications.</title>
        <authorList>
            <person name="Yu J."/>
            <person name="Wang J."/>
            <person name="Lin W."/>
            <person name="Li S."/>
            <person name="Li H."/>
            <person name="Zhou J."/>
            <person name="Ni P."/>
            <person name="Dong W."/>
            <person name="Hu S."/>
            <person name="Zeng C."/>
            <person name="Zhang J."/>
            <person name="Zhang Y."/>
            <person name="Li R."/>
            <person name="Xu Z."/>
            <person name="Li S."/>
            <person name="Li X."/>
            <person name="Zheng H."/>
            <person name="Cong L."/>
            <person name="Lin L."/>
            <person name="Yin J."/>
            <person name="Geng J."/>
            <person name="Li G."/>
            <person name="Shi J."/>
            <person name="Liu J."/>
            <person name="Lv H."/>
            <person name="Li J."/>
            <person name="Wang J."/>
            <person name="Deng Y."/>
            <person name="Ran L."/>
            <person name="Shi X."/>
            <person name="Wang X."/>
            <person name="Wu Q."/>
            <person name="Li C."/>
            <person name="Ren X."/>
            <person name="Wang J."/>
            <person name="Wang X."/>
            <person name="Li D."/>
            <person name="Liu D."/>
            <person name="Zhang X."/>
            <person name="Ji Z."/>
            <person name="Zhao W."/>
            <person name="Sun Y."/>
            <person name="Zhang Z."/>
            <person name="Bao J."/>
            <person name="Han Y."/>
            <person name="Dong L."/>
            <person name="Ji J."/>
            <person name="Chen P."/>
            <person name="Wu S."/>
            <person name="Liu J."/>
            <person name="Xiao Y."/>
            <person name="Bu D."/>
            <person name="Tan J."/>
            <person name="Yang L."/>
            <person name="Ye C."/>
            <person name="Zhang J."/>
            <person name="Xu J."/>
            <person name="Zhou Y."/>
            <person name="Yu Y."/>
            <person name="Zhang B."/>
            <person name="Zhuang S."/>
            <person name="Wei H."/>
            <person name="Liu B."/>
            <person name="Lei M."/>
            <person name="Yu H."/>
            <person name="Li Y."/>
            <person name="Xu H."/>
            <person name="Wei S."/>
            <person name="He X."/>
            <person name="Fang L."/>
            <person name="Zhang Z."/>
            <person name="Zhang Y."/>
            <person name="Huang X."/>
            <person name="Su Z."/>
            <person name="Tong W."/>
            <person name="Li J."/>
            <person name="Tong Z."/>
            <person name="Li S."/>
            <person name="Ye J."/>
            <person name="Wang L."/>
            <person name="Fang L."/>
            <person name="Lei T."/>
            <person name="Chen C.-S."/>
            <person name="Chen H.-C."/>
            <person name="Xu Z."/>
            <person name="Li H."/>
            <person name="Huang H."/>
            <person name="Zhang F."/>
            <person name="Xu H."/>
            <person name="Li N."/>
            <person name="Zhao C."/>
            <person name="Li S."/>
            <person name="Dong L."/>
            <person name="Huang Y."/>
            <person name="Li L."/>
            <person name="Xi Y."/>
            <person name="Qi Q."/>
            <person name="Li W."/>
            <person name="Zhang B."/>
            <person name="Hu W."/>
            <person name="Zhang Y."/>
            <person name="Tian X."/>
            <person name="Jiao Y."/>
            <person name="Liang X."/>
            <person name="Jin J."/>
            <person name="Gao L."/>
            <person name="Zheng W."/>
            <person name="Hao B."/>
            <person name="Liu S.-M."/>
            <person name="Wang W."/>
            <person name="Yuan L."/>
            <person name="Cao M."/>
            <person name="McDermott J."/>
            <person name="Samudrala R."/>
            <person name="Wang J."/>
            <person name="Wong G.K.-S."/>
            <person name="Yang H."/>
        </authorList>
    </citation>
    <scope>NUCLEOTIDE SEQUENCE [LARGE SCALE GENOMIC DNA]</scope>
    <source>
        <strain>cv. Nipponbare</strain>
    </source>
</reference>
<reference key="5">
    <citation type="journal article" date="2003" name="Science">
        <title>Collection, mapping, and annotation of over 28,000 cDNA clones from japonica rice.</title>
        <authorList>
            <consortium name="The rice full-length cDNA consortium"/>
        </authorList>
    </citation>
    <scope>NUCLEOTIDE SEQUENCE [LARGE SCALE MRNA]</scope>
    <source>
        <strain>cv. Nipponbare</strain>
    </source>
</reference>
<reference key="6">
    <citation type="journal article" date="2009" name="Mol. Plant">
        <title>Comparative genomic study of the thioredoxin family in photosynthetic organisms with emphasis on Populus trichocarpa.</title>
        <authorList>
            <person name="Chibani K."/>
            <person name="Wingsle G."/>
            <person name="Jacquot J.P."/>
            <person name="Gelhaye E."/>
            <person name="Rouhier N."/>
        </authorList>
    </citation>
    <scope>GENE FAMILY</scope>
    <scope>NOMENCLATURE</scope>
</reference>
<keyword id="KW-1015">Disulfide bond</keyword>
<keyword id="KW-0249">Electron transport</keyword>
<keyword id="KW-0676">Redox-active center</keyword>
<keyword id="KW-1185">Reference proteome</keyword>
<keyword id="KW-0813">Transport</keyword>
<name>TRL11_ORYSJ</name>
<evidence type="ECO:0000255" key="1"/>
<evidence type="ECO:0000255" key="2">
    <source>
        <dbReference type="PROSITE-ProRule" id="PRU00691"/>
    </source>
</evidence>
<evidence type="ECO:0000305" key="3"/>
<dbReference type="EMBL" id="AP005167">
    <property type="protein sequence ID" value="BAC83807.1"/>
    <property type="molecule type" value="Genomic_DNA"/>
</dbReference>
<dbReference type="EMBL" id="AP008213">
    <property type="protein sequence ID" value="BAF22583.1"/>
    <property type="molecule type" value="Genomic_DNA"/>
</dbReference>
<dbReference type="EMBL" id="AP014963">
    <property type="protein sequence ID" value="BAT03271.1"/>
    <property type="molecule type" value="Genomic_DNA"/>
</dbReference>
<dbReference type="EMBL" id="CM000144">
    <property type="protein sequence ID" value="EAZ41125.1"/>
    <property type="molecule type" value="Genomic_DNA"/>
</dbReference>
<dbReference type="EMBL" id="AK066094">
    <property type="protein sequence ID" value="BAG89817.1"/>
    <property type="molecule type" value="mRNA"/>
</dbReference>
<dbReference type="EMBL" id="AK104552">
    <property type="protein sequence ID" value="BAG96779.1"/>
    <property type="molecule type" value="mRNA"/>
</dbReference>
<dbReference type="EMBL" id="AK105051">
    <property type="protein sequence ID" value="BAG97082.1"/>
    <property type="molecule type" value="mRNA"/>
</dbReference>
<dbReference type="RefSeq" id="XP_015646723.1">
    <property type="nucleotide sequence ID" value="XM_015791237.1"/>
</dbReference>
<dbReference type="SMR" id="Q6Z4N3"/>
<dbReference type="FunCoup" id="Q6Z4N3">
    <property type="interactions" value="165"/>
</dbReference>
<dbReference type="STRING" id="39947.Q6Z4N3"/>
<dbReference type="PaxDb" id="39947-Q6Z4N3"/>
<dbReference type="EnsemblPlants" id="Os07t0684100-01">
    <property type="protein sequence ID" value="Os07t0684100-01"/>
    <property type="gene ID" value="Os07g0684100"/>
</dbReference>
<dbReference type="Gramene" id="Os07t0684100-01">
    <property type="protein sequence ID" value="Os07t0684100-01"/>
    <property type="gene ID" value="Os07g0684100"/>
</dbReference>
<dbReference type="KEGG" id="dosa:Os07g0684100"/>
<dbReference type="eggNOG" id="KOG0907">
    <property type="taxonomic scope" value="Eukaryota"/>
</dbReference>
<dbReference type="HOGENOM" id="CLU_055041_3_1_1"/>
<dbReference type="InParanoid" id="Q6Z4N3"/>
<dbReference type="OMA" id="AMTDRKM"/>
<dbReference type="OrthoDB" id="2121326at2759"/>
<dbReference type="Proteomes" id="UP000000763">
    <property type="component" value="Chromosome 7"/>
</dbReference>
<dbReference type="Proteomes" id="UP000007752">
    <property type="component" value="Chromosome 7"/>
</dbReference>
<dbReference type="Proteomes" id="UP000059680">
    <property type="component" value="Chromosome 7"/>
</dbReference>
<dbReference type="GO" id="GO:0009507">
    <property type="term" value="C:chloroplast"/>
    <property type="evidence" value="ECO:0000318"/>
    <property type="project" value="GO_Central"/>
</dbReference>
<dbReference type="GO" id="GO:0045454">
    <property type="term" value="P:cell redox homeostasis"/>
    <property type="evidence" value="ECO:0000318"/>
    <property type="project" value="GO_Central"/>
</dbReference>
<dbReference type="CDD" id="cd02947">
    <property type="entry name" value="TRX_family"/>
    <property type="match status" value="1"/>
</dbReference>
<dbReference type="FunFam" id="3.40.30.10:FF:000199">
    <property type="entry name" value="Thioredoxin-like 1-2, chloroplastic"/>
    <property type="match status" value="1"/>
</dbReference>
<dbReference type="Gene3D" id="3.40.30.10">
    <property type="entry name" value="Glutaredoxin"/>
    <property type="match status" value="1"/>
</dbReference>
<dbReference type="InterPro" id="IPR036249">
    <property type="entry name" value="Thioredoxin-like_sf"/>
</dbReference>
<dbReference type="InterPro" id="IPR013766">
    <property type="entry name" value="Thioredoxin_domain"/>
</dbReference>
<dbReference type="PANTHER" id="PTHR43601">
    <property type="entry name" value="THIOREDOXIN, MITOCHONDRIAL"/>
    <property type="match status" value="1"/>
</dbReference>
<dbReference type="PANTHER" id="PTHR43601:SF34">
    <property type="entry name" value="THIOREDOXIN-LIKE 1-1, CHLOROPLASTIC"/>
    <property type="match status" value="1"/>
</dbReference>
<dbReference type="Pfam" id="PF00085">
    <property type="entry name" value="Thioredoxin"/>
    <property type="match status" value="1"/>
</dbReference>
<dbReference type="SUPFAM" id="SSF52833">
    <property type="entry name" value="Thioredoxin-like"/>
    <property type="match status" value="1"/>
</dbReference>
<dbReference type="PROSITE" id="PS51352">
    <property type="entry name" value="THIOREDOXIN_2"/>
    <property type="match status" value="1"/>
</dbReference>
<gene>
    <name type="ordered locus">Os07g0684100</name>
    <name type="ordered locus">LOC_Os07g48510</name>
    <name type="ORF">OsJ_25618</name>
    <name type="ORF">OSJNBa0060O17.16</name>
</gene>
<protein>
    <recommendedName>
        <fullName>Thioredoxin-like 1-1, chloroplastic</fullName>
    </recommendedName>
    <alternativeName>
        <fullName>Lilium-type thioredoxin 1-1</fullName>
    </alternativeName>
</protein>
<sequence>MAEALCSGSVASPCGEVGVGFAAGLVRGAAAAAALAESVPIGGYSSKSTFPSGRVALTERKARPLPRNLEAAHGQMNLTIGKAMRWWEKCLQPNMREIESAQDLADSLLNAGDKLVVVDFFSPGCGGCRALHPKIAQLAEKNPEVLFLQVNYEKHKSMCYSLHVHVLPFFRFYRGAQGRVSSFSCTNATIKKFKDALAKHGPDRCGLGPAKGLEESELMALAINRDLNFTYTPNQDLVPIADALLKEAAAPGGPWLPLPATATQLFIQGSENSLLSSGR</sequence>
<organism>
    <name type="scientific">Oryza sativa subsp. japonica</name>
    <name type="common">Rice</name>
    <dbReference type="NCBI Taxonomy" id="39947"/>
    <lineage>
        <taxon>Eukaryota</taxon>
        <taxon>Viridiplantae</taxon>
        <taxon>Streptophyta</taxon>
        <taxon>Embryophyta</taxon>
        <taxon>Tracheophyta</taxon>
        <taxon>Spermatophyta</taxon>
        <taxon>Magnoliopsida</taxon>
        <taxon>Liliopsida</taxon>
        <taxon>Poales</taxon>
        <taxon>Poaceae</taxon>
        <taxon>BOP clade</taxon>
        <taxon>Oryzoideae</taxon>
        <taxon>Oryzeae</taxon>
        <taxon>Oryzinae</taxon>
        <taxon>Oryza</taxon>
        <taxon>Oryza sativa</taxon>
    </lineage>
</organism>
<proteinExistence type="evidence at transcript level"/>
<comment type="function">
    <text>Probable thiol-disulfide oxidoreductase that may participate in various redox reactions.</text>
</comment>
<comment type="similarity">
    <text evidence="3">Belongs to the thioredoxin family.</text>
</comment>
<comment type="caution">
    <text evidence="3">The active site contains a CGGC motif which differs from the conserved CGPC motif.</text>
</comment>